<feature type="chain" id="PRO_1000075796" description="Ribonuclease 3">
    <location>
        <begin position="1"/>
        <end position="239"/>
    </location>
</feature>
<feature type="domain" description="RNase III" evidence="1">
    <location>
        <begin position="12"/>
        <end position="137"/>
    </location>
</feature>
<feature type="domain" description="DRBM" evidence="1">
    <location>
        <begin position="162"/>
        <end position="231"/>
    </location>
</feature>
<feature type="active site" evidence="1">
    <location>
        <position position="54"/>
    </location>
</feature>
<feature type="active site" evidence="1">
    <location>
        <position position="126"/>
    </location>
</feature>
<feature type="binding site" evidence="1">
    <location>
        <position position="50"/>
    </location>
    <ligand>
        <name>Mg(2+)</name>
        <dbReference type="ChEBI" id="CHEBI:18420"/>
    </ligand>
</feature>
<feature type="binding site" evidence="1">
    <location>
        <position position="123"/>
    </location>
    <ligand>
        <name>Mg(2+)</name>
        <dbReference type="ChEBI" id="CHEBI:18420"/>
    </ligand>
</feature>
<feature type="binding site" evidence="1">
    <location>
        <position position="126"/>
    </location>
    <ligand>
        <name>Mg(2+)</name>
        <dbReference type="ChEBI" id="CHEBI:18420"/>
    </ligand>
</feature>
<keyword id="KW-0963">Cytoplasm</keyword>
<keyword id="KW-0255">Endonuclease</keyword>
<keyword id="KW-0378">Hydrolase</keyword>
<keyword id="KW-0460">Magnesium</keyword>
<keyword id="KW-0479">Metal-binding</keyword>
<keyword id="KW-0507">mRNA processing</keyword>
<keyword id="KW-0540">Nuclease</keyword>
<keyword id="KW-0694">RNA-binding</keyword>
<keyword id="KW-0698">rRNA processing</keyword>
<keyword id="KW-0699">rRNA-binding</keyword>
<keyword id="KW-0819">tRNA processing</keyword>
<organism>
    <name type="scientific">Rhizobium johnstonii (strain DSM 114642 / LMG 32736 / 3841)</name>
    <name type="common">Rhizobium leguminosarum bv. viciae</name>
    <dbReference type="NCBI Taxonomy" id="216596"/>
    <lineage>
        <taxon>Bacteria</taxon>
        <taxon>Pseudomonadati</taxon>
        <taxon>Pseudomonadota</taxon>
        <taxon>Alphaproteobacteria</taxon>
        <taxon>Hyphomicrobiales</taxon>
        <taxon>Rhizobiaceae</taxon>
        <taxon>Rhizobium/Agrobacterium group</taxon>
        <taxon>Rhizobium</taxon>
        <taxon>Rhizobium johnstonii</taxon>
    </lineage>
</organism>
<gene>
    <name evidence="1" type="primary">rnc</name>
    <name type="ordered locus">RL1511</name>
</gene>
<name>RNC_RHIJ3</name>
<comment type="function">
    <text evidence="1">Digests double-stranded RNA. Involved in the processing of primary rRNA transcript to yield the immediate precursors to the large and small rRNAs (23S and 16S). Processes some mRNAs, and tRNAs when they are encoded in the rRNA operon. Processes pre-crRNA and tracrRNA of type II CRISPR loci if present in the organism.</text>
</comment>
<comment type="catalytic activity">
    <reaction evidence="1">
        <text>Endonucleolytic cleavage to 5'-phosphomonoester.</text>
        <dbReference type="EC" id="3.1.26.3"/>
    </reaction>
</comment>
<comment type="cofactor">
    <cofactor evidence="1">
        <name>Mg(2+)</name>
        <dbReference type="ChEBI" id="CHEBI:18420"/>
    </cofactor>
</comment>
<comment type="subunit">
    <text evidence="1">Homodimer.</text>
</comment>
<comment type="subcellular location">
    <subcellularLocation>
        <location evidence="1">Cytoplasm</location>
    </subcellularLocation>
</comment>
<comment type="similarity">
    <text evidence="1">Belongs to the ribonuclease III family.</text>
</comment>
<reference key="1">
    <citation type="journal article" date="2006" name="Genome Biol.">
        <title>The genome of Rhizobium leguminosarum has recognizable core and accessory components.</title>
        <authorList>
            <person name="Young J.P.W."/>
            <person name="Crossman L.C."/>
            <person name="Johnston A.W.B."/>
            <person name="Thomson N.R."/>
            <person name="Ghazoui Z.F."/>
            <person name="Hull K.H."/>
            <person name="Wexler M."/>
            <person name="Curson A.R.J."/>
            <person name="Todd J.D."/>
            <person name="Poole P.S."/>
            <person name="Mauchline T.H."/>
            <person name="East A.K."/>
            <person name="Quail M.A."/>
            <person name="Churcher C."/>
            <person name="Arrowsmith C."/>
            <person name="Cherevach I."/>
            <person name="Chillingworth T."/>
            <person name="Clarke K."/>
            <person name="Cronin A."/>
            <person name="Davis P."/>
            <person name="Fraser A."/>
            <person name="Hance Z."/>
            <person name="Hauser H."/>
            <person name="Jagels K."/>
            <person name="Moule S."/>
            <person name="Mungall K."/>
            <person name="Norbertczak H."/>
            <person name="Rabbinowitsch E."/>
            <person name="Sanders M."/>
            <person name="Simmonds M."/>
            <person name="Whitehead S."/>
            <person name="Parkhill J."/>
        </authorList>
    </citation>
    <scope>NUCLEOTIDE SEQUENCE [LARGE SCALE GENOMIC DNA]</scope>
    <source>
        <strain>DSM 114642 / LMG 32736 / 3841</strain>
    </source>
</reference>
<dbReference type="EC" id="3.1.26.3" evidence="1"/>
<dbReference type="EMBL" id="AM236080">
    <property type="protein sequence ID" value="CAK07006.1"/>
    <property type="molecule type" value="Genomic_DNA"/>
</dbReference>
<dbReference type="RefSeq" id="WP_011651202.1">
    <property type="nucleotide sequence ID" value="NC_008380.1"/>
</dbReference>
<dbReference type="SMR" id="Q1MJ54"/>
<dbReference type="EnsemblBacteria" id="CAK07006">
    <property type="protein sequence ID" value="CAK07006"/>
    <property type="gene ID" value="RL1511"/>
</dbReference>
<dbReference type="KEGG" id="rle:RL1511"/>
<dbReference type="eggNOG" id="COG0571">
    <property type="taxonomic scope" value="Bacteria"/>
</dbReference>
<dbReference type="HOGENOM" id="CLU_000907_1_1_5"/>
<dbReference type="Proteomes" id="UP000006575">
    <property type="component" value="Chromosome"/>
</dbReference>
<dbReference type="GO" id="GO:0005737">
    <property type="term" value="C:cytoplasm"/>
    <property type="evidence" value="ECO:0007669"/>
    <property type="project" value="UniProtKB-SubCell"/>
</dbReference>
<dbReference type="GO" id="GO:0003725">
    <property type="term" value="F:double-stranded RNA binding"/>
    <property type="evidence" value="ECO:0007669"/>
    <property type="project" value="TreeGrafter"/>
</dbReference>
<dbReference type="GO" id="GO:0046872">
    <property type="term" value="F:metal ion binding"/>
    <property type="evidence" value="ECO:0007669"/>
    <property type="project" value="UniProtKB-KW"/>
</dbReference>
<dbReference type="GO" id="GO:0004525">
    <property type="term" value="F:ribonuclease III activity"/>
    <property type="evidence" value="ECO:0007669"/>
    <property type="project" value="UniProtKB-UniRule"/>
</dbReference>
<dbReference type="GO" id="GO:0019843">
    <property type="term" value="F:rRNA binding"/>
    <property type="evidence" value="ECO:0007669"/>
    <property type="project" value="UniProtKB-KW"/>
</dbReference>
<dbReference type="GO" id="GO:0006397">
    <property type="term" value="P:mRNA processing"/>
    <property type="evidence" value="ECO:0007669"/>
    <property type="project" value="UniProtKB-UniRule"/>
</dbReference>
<dbReference type="GO" id="GO:0010468">
    <property type="term" value="P:regulation of gene expression"/>
    <property type="evidence" value="ECO:0007669"/>
    <property type="project" value="TreeGrafter"/>
</dbReference>
<dbReference type="GO" id="GO:0006364">
    <property type="term" value="P:rRNA processing"/>
    <property type="evidence" value="ECO:0007669"/>
    <property type="project" value="UniProtKB-UniRule"/>
</dbReference>
<dbReference type="GO" id="GO:0008033">
    <property type="term" value="P:tRNA processing"/>
    <property type="evidence" value="ECO:0007669"/>
    <property type="project" value="UniProtKB-KW"/>
</dbReference>
<dbReference type="CDD" id="cd10845">
    <property type="entry name" value="DSRM_RNAse_III_family"/>
    <property type="match status" value="1"/>
</dbReference>
<dbReference type="CDD" id="cd00593">
    <property type="entry name" value="RIBOc"/>
    <property type="match status" value="1"/>
</dbReference>
<dbReference type="Gene3D" id="3.30.160.20">
    <property type="match status" value="1"/>
</dbReference>
<dbReference type="Gene3D" id="1.10.1520.10">
    <property type="entry name" value="Ribonuclease III domain"/>
    <property type="match status" value="1"/>
</dbReference>
<dbReference type="HAMAP" id="MF_00104">
    <property type="entry name" value="RNase_III"/>
    <property type="match status" value="1"/>
</dbReference>
<dbReference type="InterPro" id="IPR014720">
    <property type="entry name" value="dsRBD_dom"/>
</dbReference>
<dbReference type="InterPro" id="IPR011907">
    <property type="entry name" value="RNase_III"/>
</dbReference>
<dbReference type="InterPro" id="IPR000999">
    <property type="entry name" value="RNase_III_dom"/>
</dbReference>
<dbReference type="InterPro" id="IPR036389">
    <property type="entry name" value="RNase_III_sf"/>
</dbReference>
<dbReference type="NCBIfam" id="TIGR02191">
    <property type="entry name" value="RNaseIII"/>
    <property type="match status" value="1"/>
</dbReference>
<dbReference type="PANTHER" id="PTHR11207:SF0">
    <property type="entry name" value="RIBONUCLEASE 3"/>
    <property type="match status" value="1"/>
</dbReference>
<dbReference type="PANTHER" id="PTHR11207">
    <property type="entry name" value="RIBONUCLEASE III"/>
    <property type="match status" value="1"/>
</dbReference>
<dbReference type="Pfam" id="PF00035">
    <property type="entry name" value="dsrm"/>
    <property type="match status" value="1"/>
</dbReference>
<dbReference type="Pfam" id="PF14622">
    <property type="entry name" value="Ribonucleas_3_3"/>
    <property type="match status" value="1"/>
</dbReference>
<dbReference type="SMART" id="SM00358">
    <property type="entry name" value="DSRM"/>
    <property type="match status" value="1"/>
</dbReference>
<dbReference type="SMART" id="SM00535">
    <property type="entry name" value="RIBOc"/>
    <property type="match status" value="1"/>
</dbReference>
<dbReference type="SUPFAM" id="SSF54768">
    <property type="entry name" value="dsRNA-binding domain-like"/>
    <property type="match status" value="1"/>
</dbReference>
<dbReference type="SUPFAM" id="SSF69065">
    <property type="entry name" value="RNase III domain-like"/>
    <property type="match status" value="1"/>
</dbReference>
<dbReference type="PROSITE" id="PS50137">
    <property type="entry name" value="DS_RBD"/>
    <property type="match status" value="1"/>
</dbReference>
<dbReference type="PROSITE" id="PS00517">
    <property type="entry name" value="RNASE_3_1"/>
    <property type="match status" value="1"/>
</dbReference>
<dbReference type="PROSITE" id="PS50142">
    <property type="entry name" value="RNASE_3_2"/>
    <property type="match status" value="1"/>
</dbReference>
<proteinExistence type="inferred from homology"/>
<sequence length="239" mass="26451">MSKAQTLSAADRAKLEGLIGHDFAEKERLDRALTHASARTEKGGNYERLEFLGDRVLGLCIAELLFRTFGTAGEGELSVRLNQLVSAETCAAVADELNLHLYIRTGADVKKLTGKRMMNVRADVVESLIAAIYLDGGLEVARRFILRYWQGRAVRADGAKRDAKTELQEWSHAKFGVTPIYRVDERSGPDHDPRFKVTVEVAGIKPETGVERSKRAAEQVAATKMLEREGIWQQSPAGN</sequence>
<protein>
    <recommendedName>
        <fullName evidence="1">Ribonuclease 3</fullName>
        <ecNumber evidence="1">3.1.26.3</ecNumber>
    </recommendedName>
    <alternativeName>
        <fullName evidence="1">Ribonuclease III</fullName>
        <shortName evidence="1">RNase III</shortName>
    </alternativeName>
</protein>
<accession>Q1MJ54</accession>
<evidence type="ECO:0000255" key="1">
    <source>
        <dbReference type="HAMAP-Rule" id="MF_00104"/>
    </source>
</evidence>